<feature type="chain" id="PRO_0000339067" description="ATP synthase subunit alpha, chloroplastic">
    <location>
        <begin position="1"/>
        <end position="507"/>
    </location>
</feature>
<feature type="binding site" evidence="2">
    <location>
        <begin position="170"/>
        <end position="177"/>
    </location>
    <ligand>
        <name>ATP</name>
        <dbReference type="ChEBI" id="CHEBI:30616"/>
    </ligand>
</feature>
<feature type="site" description="Required for activity" evidence="2">
    <location>
        <position position="363"/>
    </location>
</feature>
<feature type="modified residue" description="Phosphothreonine" evidence="1">
    <location>
        <position position="257"/>
    </location>
</feature>
<dbReference type="EC" id="7.1.2.2" evidence="2"/>
<dbReference type="EMBL" id="AP009366">
    <property type="protein sequence ID" value="BAF49755.1"/>
    <property type="molecule type" value="Genomic_DNA"/>
</dbReference>
<dbReference type="RefSeq" id="YP_001122931.1">
    <property type="nucleotide sequence ID" value="NC_009265.1"/>
</dbReference>
<dbReference type="SMR" id="A4QJA0"/>
<dbReference type="GeneID" id="4968594"/>
<dbReference type="GO" id="GO:0009535">
    <property type="term" value="C:chloroplast thylakoid membrane"/>
    <property type="evidence" value="ECO:0007669"/>
    <property type="project" value="UniProtKB-SubCell"/>
</dbReference>
<dbReference type="GO" id="GO:0045259">
    <property type="term" value="C:proton-transporting ATP synthase complex"/>
    <property type="evidence" value="ECO:0007669"/>
    <property type="project" value="UniProtKB-KW"/>
</dbReference>
<dbReference type="GO" id="GO:0043531">
    <property type="term" value="F:ADP binding"/>
    <property type="evidence" value="ECO:0007669"/>
    <property type="project" value="TreeGrafter"/>
</dbReference>
<dbReference type="GO" id="GO:0005524">
    <property type="term" value="F:ATP binding"/>
    <property type="evidence" value="ECO:0007669"/>
    <property type="project" value="UniProtKB-UniRule"/>
</dbReference>
<dbReference type="GO" id="GO:0046933">
    <property type="term" value="F:proton-transporting ATP synthase activity, rotational mechanism"/>
    <property type="evidence" value="ECO:0007669"/>
    <property type="project" value="UniProtKB-UniRule"/>
</dbReference>
<dbReference type="CDD" id="cd18113">
    <property type="entry name" value="ATP-synt_F1_alpha_C"/>
    <property type="match status" value="1"/>
</dbReference>
<dbReference type="CDD" id="cd18116">
    <property type="entry name" value="ATP-synt_F1_alpha_N"/>
    <property type="match status" value="1"/>
</dbReference>
<dbReference type="CDD" id="cd01132">
    <property type="entry name" value="F1-ATPase_alpha_CD"/>
    <property type="match status" value="1"/>
</dbReference>
<dbReference type="FunFam" id="1.20.150.20:FF:000001">
    <property type="entry name" value="ATP synthase subunit alpha"/>
    <property type="match status" value="1"/>
</dbReference>
<dbReference type="FunFam" id="2.40.30.20:FF:000001">
    <property type="entry name" value="ATP synthase subunit alpha"/>
    <property type="match status" value="1"/>
</dbReference>
<dbReference type="FunFam" id="3.40.50.300:FF:000002">
    <property type="entry name" value="ATP synthase subunit alpha"/>
    <property type="match status" value="1"/>
</dbReference>
<dbReference type="Gene3D" id="2.40.30.20">
    <property type="match status" value="1"/>
</dbReference>
<dbReference type="Gene3D" id="1.20.150.20">
    <property type="entry name" value="ATP synthase alpha/beta chain, C-terminal domain"/>
    <property type="match status" value="1"/>
</dbReference>
<dbReference type="Gene3D" id="3.40.50.300">
    <property type="entry name" value="P-loop containing nucleotide triphosphate hydrolases"/>
    <property type="match status" value="1"/>
</dbReference>
<dbReference type="HAMAP" id="MF_01346">
    <property type="entry name" value="ATP_synth_alpha_bact"/>
    <property type="match status" value="1"/>
</dbReference>
<dbReference type="InterPro" id="IPR023366">
    <property type="entry name" value="ATP_synth_asu-like_sf"/>
</dbReference>
<dbReference type="InterPro" id="IPR000793">
    <property type="entry name" value="ATP_synth_asu_C"/>
</dbReference>
<dbReference type="InterPro" id="IPR038376">
    <property type="entry name" value="ATP_synth_asu_C_sf"/>
</dbReference>
<dbReference type="InterPro" id="IPR033732">
    <property type="entry name" value="ATP_synth_F1_a_nt-bd_dom"/>
</dbReference>
<dbReference type="InterPro" id="IPR005294">
    <property type="entry name" value="ATP_synth_F1_asu"/>
</dbReference>
<dbReference type="InterPro" id="IPR020003">
    <property type="entry name" value="ATPase_a/bsu_AS"/>
</dbReference>
<dbReference type="InterPro" id="IPR004100">
    <property type="entry name" value="ATPase_F1/V1/A1_a/bsu_N"/>
</dbReference>
<dbReference type="InterPro" id="IPR036121">
    <property type="entry name" value="ATPase_F1/V1/A1_a/bsu_N_sf"/>
</dbReference>
<dbReference type="InterPro" id="IPR000194">
    <property type="entry name" value="ATPase_F1/V1/A1_a/bsu_nucl-bd"/>
</dbReference>
<dbReference type="InterPro" id="IPR027417">
    <property type="entry name" value="P-loop_NTPase"/>
</dbReference>
<dbReference type="NCBIfam" id="TIGR00962">
    <property type="entry name" value="atpA"/>
    <property type="match status" value="1"/>
</dbReference>
<dbReference type="NCBIfam" id="NF009884">
    <property type="entry name" value="PRK13343.1"/>
    <property type="match status" value="1"/>
</dbReference>
<dbReference type="PANTHER" id="PTHR48082">
    <property type="entry name" value="ATP SYNTHASE SUBUNIT ALPHA, MITOCHONDRIAL"/>
    <property type="match status" value="1"/>
</dbReference>
<dbReference type="PANTHER" id="PTHR48082:SF2">
    <property type="entry name" value="ATP SYNTHASE SUBUNIT ALPHA, MITOCHONDRIAL"/>
    <property type="match status" value="1"/>
</dbReference>
<dbReference type="Pfam" id="PF00006">
    <property type="entry name" value="ATP-synt_ab"/>
    <property type="match status" value="1"/>
</dbReference>
<dbReference type="Pfam" id="PF00306">
    <property type="entry name" value="ATP-synt_ab_C"/>
    <property type="match status" value="1"/>
</dbReference>
<dbReference type="Pfam" id="PF02874">
    <property type="entry name" value="ATP-synt_ab_N"/>
    <property type="match status" value="1"/>
</dbReference>
<dbReference type="PIRSF" id="PIRSF039088">
    <property type="entry name" value="F_ATPase_subunit_alpha"/>
    <property type="match status" value="1"/>
</dbReference>
<dbReference type="SUPFAM" id="SSF47917">
    <property type="entry name" value="C-terminal domain of alpha and beta subunits of F1 ATP synthase"/>
    <property type="match status" value="1"/>
</dbReference>
<dbReference type="SUPFAM" id="SSF50615">
    <property type="entry name" value="N-terminal domain of alpha and beta subunits of F1 ATP synthase"/>
    <property type="match status" value="1"/>
</dbReference>
<dbReference type="SUPFAM" id="SSF52540">
    <property type="entry name" value="P-loop containing nucleoside triphosphate hydrolases"/>
    <property type="match status" value="1"/>
</dbReference>
<dbReference type="PROSITE" id="PS00152">
    <property type="entry name" value="ATPASE_ALPHA_BETA"/>
    <property type="match status" value="1"/>
</dbReference>
<evidence type="ECO:0000250" key="1">
    <source>
        <dbReference type="UniProtKB" id="P56757"/>
    </source>
</evidence>
<evidence type="ECO:0000255" key="2">
    <source>
        <dbReference type="HAMAP-Rule" id="MF_01346"/>
    </source>
</evidence>
<protein>
    <recommendedName>
        <fullName evidence="2">ATP synthase subunit alpha, chloroplastic</fullName>
        <ecNumber evidence="2">7.1.2.2</ecNumber>
    </recommendedName>
    <alternativeName>
        <fullName evidence="2">ATP synthase F1 sector subunit alpha</fullName>
    </alternativeName>
    <alternativeName>
        <fullName evidence="2">F-ATPase subunit alpha</fullName>
    </alternativeName>
</protein>
<proteinExistence type="inferred from homology"/>
<geneLocation type="chloroplast"/>
<sequence length="507" mass="55337">MVTLKADEISNIIRERIEQYNREVKIVNTGTVLQVGDGIARIYGLDEVMAGELVEFEEGTIGIALNLESNNVGVVLMGDGLMIQEGSSVKATGKIAQIPVSEAYLGRVINALANPIDGRGKISASESRLIESPAPGIISRRSVYEPLQTGLIAIDSMIPIGRGQRELIIGDRQTGKTAVATDTILNQEGQNVICVYVAIGQKASSVAQVVTSLQERGAMEYTIVVAETADSPATLQYLAPYTGAALAEYFMYREQHTLIIYDDLSKQAQAYRQMSLLLRRPPGREAYPGDVFYLHSRLLERAAKLSSQLGEGSMTALPIVETQSGDVSAYIPTNVISITDGQIFLSADLFNAGIRPAINVGISVSRVGSAAQIKAMKQVAGKLKLELAQFAELEAFAQFSSDLDKATQNQLARGQRLRELLKQSQSAPLTVEEQIMTIYTGTNGYLDGLEIGQVRKFLVQLRTYLKTNKPQFQEIISSTKTLTNEAESVLKEGIQEQLERFLLQEKL</sequence>
<keyword id="KW-0066">ATP synthesis</keyword>
<keyword id="KW-0067">ATP-binding</keyword>
<keyword id="KW-0139">CF(1)</keyword>
<keyword id="KW-0150">Chloroplast</keyword>
<keyword id="KW-0375">Hydrogen ion transport</keyword>
<keyword id="KW-0406">Ion transport</keyword>
<keyword id="KW-0472">Membrane</keyword>
<keyword id="KW-0547">Nucleotide-binding</keyword>
<keyword id="KW-0597">Phosphoprotein</keyword>
<keyword id="KW-0934">Plastid</keyword>
<keyword id="KW-0793">Thylakoid</keyword>
<keyword id="KW-1278">Translocase</keyword>
<keyword id="KW-0813">Transport</keyword>
<accession>A4QJA0</accession>
<comment type="function">
    <text evidence="2">Produces ATP from ADP in the presence of a proton gradient across the membrane. The alpha chain is a regulatory subunit.</text>
</comment>
<comment type="catalytic activity">
    <reaction evidence="2">
        <text>ATP + H2O + 4 H(+)(in) = ADP + phosphate + 5 H(+)(out)</text>
        <dbReference type="Rhea" id="RHEA:57720"/>
        <dbReference type="ChEBI" id="CHEBI:15377"/>
        <dbReference type="ChEBI" id="CHEBI:15378"/>
        <dbReference type="ChEBI" id="CHEBI:30616"/>
        <dbReference type="ChEBI" id="CHEBI:43474"/>
        <dbReference type="ChEBI" id="CHEBI:456216"/>
        <dbReference type="EC" id="7.1.2.2"/>
    </reaction>
</comment>
<comment type="subunit">
    <text evidence="2">F-type ATPases have 2 components, CF(1) - the catalytic core - and CF(0) - the membrane proton channel. CF(1) has five subunits: alpha(3), beta(3), gamma(1), delta(1), epsilon(1). CF(0) has four main subunits: a, b, b' and c.</text>
</comment>
<comment type="subcellular location">
    <subcellularLocation>
        <location evidence="2">Plastid</location>
        <location evidence="2">Chloroplast thylakoid membrane</location>
        <topology evidence="2">Peripheral membrane protein</topology>
    </subcellularLocation>
</comment>
<comment type="similarity">
    <text evidence="2">Belongs to the ATPase alpha/beta chains family.</text>
</comment>
<name>ATPA_AETCO</name>
<gene>
    <name evidence="2" type="primary">atpA</name>
</gene>
<reference key="1">
    <citation type="submission" date="2007-03" db="EMBL/GenBank/DDBJ databases">
        <title>Sequencing analysis of Aethionema coridifolium chloroplast DNA.</title>
        <authorList>
            <person name="Hosouchi T."/>
            <person name="Tsuruoka H."/>
            <person name="Kotani H."/>
        </authorList>
    </citation>
    <scope>NUCLEOTIDE SEQUENCE [LARGE SCALE GENOMIC DNA]</scope>
</reference>
<organism>
    <name type="scientific">Aethionema cordifolium</name>
    <name type="common">Lebanon stonecress</name>
    <dbReference type="NCBI Taxonomy" id="434059"/>
    <lineage>
        <taxon>Eukaryota</taxon>
        <taxon>Viridiplantae</taxon>
        <taxon>Streptophyta</taxon>
        <taxon>Embryophyta</taxon>
        <taxon>Tracheophyta</taxon>
        <taxon>Spermatophyta</taxon>
        <taxon>Magnoliopsida</taxon>
        <taxon>eudicotyledons</taxon>
        <taxon>Gunneridae</taxon>
        <taxon>Pentapetalae</taxon>
        <taxon>rosids</taxon>
        <taxon>malvids</taxon>
        <taxon>Brassicales</taxon>
        <taxon>Brassicaceae</taxon>
        <taxon>Aethionemeae</taxon>
        <taxon>Aethionema</taxon>
    </lineage>
</organism>